<protein>
    <recommendedName>
        <fullName evidence="1">Anthranilate phosphoribosyltransferase</fullName>
        <ecNumber evidence="1">2.4.2.18</ecNumber>
    </recommendedName>
</protein>
<dbReference type="EC" id="2.4.2.18" evidence="1"/>
<dbReference type="EMBL" id="M33814">
    <property type="protein sequence ID" value="AAA25824.1"/>
    <property type="molecule type" value="Genomic_DNA"/>
</dbReference>
<dbReference type="EMBL" id="AE004091">
    <property type="protein sequence ID" value="AAG04039.1"/>
    <property type="molecule type" value="Genomic_DNA"/>
</dbReference>
<dbReference type="PIR" id="B35114">
    <property type="entry name" value="B35114"/>
</dbReference>
<dbReference type="RefSeq" id="NP_249341.1">
    <property type="nucleotide sequence ID" value="NC_002516.2"/>
</dbReference>
<dbReference type="RefSeq" id="WP_003085203.1">
    <property type="nucleotide sequence ID" value="NZ_QZGE01000010.1"/>
</dbReference>
<dbReference type="SMR" id="P20574"/>
<dbReference type="FunCoup" id="P20574">
    <property type="interactions" value="507"/>
</dbReference>
<dbReference type="STRING" id="208964.PA0650"/>
<dbReference type="PaxDb" id="208964-PA0650"/>
<dbReference type="GeneID" id="880665"/>
<dbReference type="KEGG" id="pae:PA0650"/>
<dbReference type="PATRIC" id="fig|208964.12.peg.681"/>
<dbReference type="PseudoCAP" id="PA0650"/>
<dbReference type="HOGENOM" id="CLU_034315_2_1_6"/>
<dbReference type="InParanoid" id="P20574"/>
<dbReference type="OrthoDB" id="9806430at2"/>
<dbReference type="PhylomeDB" id="P20574"/>
<dbReference type="BioCyc" id="PAER208964:G1FZ6-655-MONOMER"/>
<dbReference type="UniPathway" id="UPA00035">
    <property type="reaction ID" value="UER00041"/>
</dbReference>
<dbReference type="Proteomes" id="UP000002438">
    <property type="component" value="Chromosome"/>
</dbReference>
<dbReference type="GO" id="GO:0005829">
    <property type="term" value="C:cytosol"/>
    <property type="evidence" value="ECO:0000318"/>
    <property type="project" value="GO_Central"/>
</dbReference>
<dbReference type="GO" id="GO:0004048">
    <property type="term" value="F:anthranilate phosphoribosyltransferase activity"/>
    <property type="evidence" value="ECO:0007669"/>
    <property type="project" value="UniProtKB-UniRule"/>
</dbReference>
<dbReference type="GO" id="GO:0000287">
    <property type="term" value="F:magnesium ion binding"/>
    <property type="evidence" value="ECO:0007669"/>
    <property type="project" value="UniProtKB-UniRule"/>
</dbReference>
<dbReference type="GO" id="GO:0000162">
    <property type="term" value="P:L-tryptophan biosynthetic process"/>
    <property type="evidence" value="ECO:0000318"/>
    <property type="project" value="GO_Central"/>
</dbReference>
<dbReference type="FunFam" id="1.20.970.10:FF:000006">
    <property type="entry name" value="Anthranilate phosphoribosyltransferase"/>
    <property type="match status" value="1"/>
</dbReference>
<dbReference type="FunFam" id="3.40.1030.10:FF:000002">
    <property type="entry name" value="Anthranilate phosphoribosyltransferase"/>
    <property type="match status" value="1"/>
</dbReference>
<dbReference type="Gene3D" id="3.40.1030.10">
    <property type="entry name" value="Nucleoside phosphorylase/phosphoribosyltransferase catalytic domain"/>
    <property type="match status" value="1"/>
</dbReference>
<dbReference type="Gene3D" id="1.20.970.10">
    <property type="entry name" value="Transferase, Pyrimidine Nucleoside Phosphorylase, Chain C"/>
    <property type="match status" value="1"/>
</dbReference>
<dbReference type="HAMAP" id="MF_00211">
    <property type="entry name" value="TrpD"/>
    <property type="match status" value="1"/>
</dbReference>
<dbReference type="InterPro" id="IPR005940">
    <property type="entry name" value="Anthranilate_Pribosyl_Tfrase"/>
</dbReference>
<dbReference type="InterPro" id="IPR000312">
    <property type="entry name" value="Glycosyl_Trfase_fam3"/>
</dbReference>
<dbReference type="InterPro" id="IPR017459">
    <property type="entry name" value="Glycosyl_Trfase_fam3_N_dom"/>
</dbReference>
<dbReference type="InterPro" id="IPR036320">
    <property type="entry name" value="Glycosyl_Trfase_fam3_N_dom_sf"/>
</dbReference>
<dbReference type="InterPro" id="IPR035902">
    <property type="entry name" value="Nuc_phospho_transferase"/>
</dbReference>
<dbReference type="NCBIfam" id="TIGR01245">
    <property type="entry name" value="trpD"/>
    <property type="match status" value="1"/>
</dbReference>
<dbReference type="PANTHER" id="PTHR43285">
    <property type="entry name" value="ANTHRANILATE PHOSPHORIBOSYLTRANSFERASE"/>
    <property type="match status" value="1"/>
</dbReference>
<dbReference type="PANTHER" id="PTHR43285:SF2">
    <property type="entry name" value="ANTHRANILATE PHOSPHORIBOSYLTRANSFERASE"/>
    <property type="match status" value="1"/>
</dbReference>
<dbReference type="Pfam" id="PF02885">
    <property type="entry name" value="Glycos_trans_3N"/>
    <property type="match status" value="1"/>
</dbReference>
<dbReference type="Pfam" id="PF00591">
    <property type="entry name" value="Glycos_transf_3"/>
    <property type="match status" value="1"/>
</dbReference>
<dbReference type="SUPFAM" id="SSF52418">
    <property type="entry name" value="Nucleoside phosphorylase/phosphoribosyltransferase catalytic domain"/>
    <property type="match status" value="1"/>
</dbReference>
<dbReference type="SUPFAM" id="SSF47648">
    <property type="entry name" value="Nucleoside phosphorylase/phosphoribosyltransferase N-terminal domain"/>
    <property type="match status" value="1"/>
</dbReference>
<evidence type="ECO:0000255" key="1">
    <source>
        <dbReference type="HAMAP-Rule" id="MF_00211"/>
    </source>
</evidence>
<comment type="function">
    <text evidence="1">Catalyzes the transfer of the phosphoribosyl group of 5-phosphorylribose-1-pyrophosphate (PRPP) to anthranilate to yield N-(5'-phosphoribosyl)-anthranilate (PRA).</text>
</comment>
<comment type="catalytic activity">
    <reaction evidence="1">
        <text>N-(5-phospho-beta-D-ribosyl)anthranilate + diphosphate = 5-phospho-alpha-D-ribose 1-diphosphate + anthranilate</text>
        <dbReference type="Rhea" id="RHEA:11768"/>
        <dbReference type="ChEBI" id="CHEBI:16567"/>
        <dbReference type="ChEBI" id="CHEBI:18277"/>
        <dbReference type="ChEBI" id="CHEBI:33019"/>
        <dbReference type="ChEBI" id="CHEBI:58017"/>
        <dbReference type="EC" id="2.4.2.18"/>
    </reaction>
</comment>
<comment type="cofactor">
    <cofactor evidence="1">
        <name>Mg(2+)</name>
        <dbReference type="ChEBI" id="CHEBI:18420"/>
    </cofactor>
    <text evidence="1">Binds 2 magnesium ions per monomer.</text>
</comment>
<comment type="pathway">
    <text evidence="1">Amino-acid biosynthesis; L-tryptophan biosynthesis; L-tryptophan from chorismate: step 2/5.</text>
</comment>
<comment type="subunit">
    <text evidence="1">Homodimer.</text>
</comment>
<comment type="similarity">
    <text evidence="1">Belongs to the anthranilate phosphoribosyltransferase family.</text>
</comment>
<feature type="chain" id="PRO_0000154468" description="Anthranilate phosphoribosyltransferase">
    <location>
        <begin position="1"/>
        <end position="349"/>
    </location>
</feature>
<feature type="binding site" evidence="1">
    <location>
        <position position="82"/>
    </location>
    <ligand>
        <name>5-phospho-alpha-D-ribose 1-diphosphate</name>
        <dbReference type="ChEBI" id="CHEBI:58017"/>
    </ligand>
</feature>
<feature type="binding site" evidence="1">
    <location>
        <position position="82"/>
    </location>
    <ligand>
        <name>anthranilate</name>
        <dbReference type="ChEBI" id="CHEBI:16567"/>
        <label>1</label>
    </ligand>
</feature>
<feature type="binding site" evidence="1">
    <location>
        <begin position="85"/>
        <end position="86"/>
    </location>
    <ligand>
        <name>5-phospho-alpha-D-ribose 1-diphosphate</name>
        <dbReference type="ChEBI" id="CHEBI:58017"/>
    </ligand>
</feature>
<feature type="binding site" evidence="1">
    <location>
        <begin position="92"/>
        <end position="95"/>
    </location>
    <ligand>
        <name>5-phospho-alpha-D-ribose 1-diphosphate</name>
        <dbReference type="ChEBI" id="CHEBI:58017"/>
    </ligand>
</feature>
<feature type="binding site" evidence="1">
    <location>
        <position position="94"/>
    </location>
    <ligand>
        <name>Mg(2+)</name>
        <dbReference type="ChEBI" id="CHEBI:18420"/>
        <label>1</label>
    </ligand>
</feature>
<feature type="binding site" evidence="1">
    <location>
        <begin position="110"/>
        <end position="118"/>
    </location>
    <ligand>
        <name>5-phospho-alpha-D-ribose 1-diphosphate</name>
        <dbReference type="ChEBI" id="CHEBI:58017"/>
    </ligand>
</feature>
<feature type="binding site" evidence="1">
    <location>
        <position position="113"/>
    </location>
    <ligand>
        <name>anthranilate</name>
        <dbReference type="ChEBI" id="CHEBI:16567"/>
        <label>1</label>
    </ligand>
</feature>
<feature type="binding site" evidence="1">
    <location>
        <position position="122"/>
    </location>
    <ligand>
        <name>5-phospho-alpha-D-ribose 1-diphosphate</name>
        <dbReference type="ChEBI" id="CHEBI:58017"/>
    </ligand>
</feature>
<feature type="binding site" evidence="1">
    <location>
        <position position="168"/>
    </location>
    <ligand>
        <name>anthranilate</name>
        <dbReference type="ChEBI" id="CHEBI:16567"/>
        <label>2</label>
    </ligand>
</feature>
<feature type="binding site" evidence="1">
    <location>
        <position position="227"/>
    </location>
    <ligand>
        <name>Mg(2+)</name>
        <dbReference type="ChEBI" id="CHEBI:18420"/>
        <label>2</label>
    </ligand>
</feature>
<feature type="binding site" evidence="1">
    <location>
        <position position="228"/>
    </location>
    <ligand>
        <name>Mg(2+)</name>
        <dbReference type="ChEBI" id="CHEBI:18420"/>
        <label>1</label>
    </ligand>
</feature>
<feature type="binding site" evidence="1">
    <location>
        <position position="228"/>
    </location>
    <ligand>
        <name>Mg(2+)</name>
        <dbReference type="ChEBI" id="CHEBI:18420"/>
        <label>2</label>
    </ligand>
</feature>
<name>TRPD_PSEAE</name>
<sequence>MDIKGALNRIVNQLDLTTEEMQAVMRQIMTGQCTDAQIGAFLMGMRMKSETIDEIVGAVAVMRELADGVQLPTLKHVVDVVGTGGDGANIFNVSSAASFVVAAAGGKVAKHGNRAVSGKSGSADLLEAAGIYLELTSEQVARCIDTVGVGFMFAQVHHKAMKYAAGPRRELGLRTLFNMLGPLTNPAGVRHQVVGVFTQELCKPLAEVLKRLGSEHVLVVHSRDGLDEFSLAAATHIAELKDGEVREYEVRPEDFGIKSQTLMGLEVDSPQASLELIRDALGRRKTEAGQKAAELIVMNAGPALYAADLATSLHEGIQLAHDALHTGLAREKMDELVAFTAVYREENAQ</sequence>
<keyword id="KW-0028">Amino-acid biosynthesis</keyword>
<keyword id="KW-0057">Aromatic amino acid biosynthesis</keyword>
<keyword id="KW-0328">Glycosyltransferase</keyword>
<keyword id="KW-0460">Magnesium</keyword>
<keyword id="KW-0479">Metal-binding</keyword>
<keyword id="KW-1185">Reference proteome</keyword>
<keyword id="KW-0808">Transferase</keyword>
<keyword id="KW-0822">Tryptophan biosynthesis</keyword>
<proteinExistence type="inferred from homology"/>
<organism>
    <name type="scientific">Pseudomonas aeruginosa (strain ATCC 15692 / DSM 22644 / CIP 104116 / JCM 14847 / LMG 12228 / 1C / PRS 101 / PAO1)</name>
    <dbReference type="NCBI Taxonomy" id="208964"/>
    <lineage>
        <taxon>Bacteria</taxon>
        <taxon>Pseudomonadati</taxon>
        <taxon>Pseudomonadota</taxon>
        <taxon>Gammaproteobacteria</taxon>
        <taxon>Pseudomonadales</taxon>
        <taxon>Pseudomonadaceae</taxon>
        <taxon>Pseudomonas</taxon>
    </lineage>
</organism>
<gene>
    <name evidence="1" type="primary">trpD</name>
    <name type="ordered locus">PA0650</name>
</gene>
<reference key="1">
    <citation type="journal article" date="1990" name="J. Bacteriol.">
        <title>DNA sequences and characterization of four early genes of the tryptophan pathway in Pseudomonas aeruginosa.</title>
        <authorList>
            <person name="Essar D.W."/>
            <person name="Eberly L."/>
            <person name="Han C.Y."/>
            <person name="Crawford I.P."/>
        </authorList>
    </citation>
    <scope>NUCLEOTIDE SEQUENCE [GENOMIC DNA]</scope>
</reference>
<reference key="2">
    <citation type="journal article" date="2000" name="Nature">
        <title>Complete genome sequence of Pseudomonas aeruginosa PAO1, an opportunistic pathogen.</title>
        <authorList>
            <person name="Stover C.K."/>
            <person name="Pham X.-Q.T."/>
            <person name="Erwin A.L."/>
            <person name="Mizoguchi S.D."/>
            <person name="Warrener P."/>
            <person name="Hickey M.J."/>
            <person name="Brinkman F.S.L."/>
            <person name="Hufnagle W.O."/>
            <person name="Kowalik D.J."/>
            <person name="Lagrou M."/>
            <person name="Garber R.L."/>
            <person name="Goltry L."/>
            <person name="Tolentino E."/>
            <person name="Westbrock-Wadman S."/>
            <person name="Yuan Y."/>
            <person name="Brody L.L."/>
            <person name="Coulter S.N."/>
            <person name="Folger K.R."/>
            <person name="Kas A."/>
            <person name="Larbig K."/>
            <person name="Lim R.M."/>
            <person name="Smith K.A."/>
            <person name="Spencer D.H."/>
            <person name="Wong G.K.-S."/>
            <person name="Wu Z."/>
            <person name="Paulsen I.T."/>
            <person name="Reizer J."/>
            <person name="Saier M.H. Jr."/>
            <person name="Hancock R.E.W."/>
            <person name="Lory S."/>
            <person name="Olson M.V."/>
        </authorList>
    </citation>
    <scope>NUCLEOTIDE SEQUENCE [LARGE SCALE GENOMIC DNA]</scope>
    <source>
        <strain>ATCC 15692 / DSM 22644 / CIP 104116 / JCM 14847 / LMG 12228 / 1C / PRS 101 / PAO1</strain>
    </source>
</reference>
<accession>P20574</accession>